<organism>
    <name type="scientific">Methanothermobacter thermautotrophicus (strain ATCC 29096 / DSM 1053 / JCM 10044 / NBRC 100330 / Delta H)</name>
    <name type="common">Methanobacterium thermoautotrophicum</name>
    <dbReference type="NCBI Taxonomy" id="187420"/>
    <lineage>
        <taxon>Archaea</taxon>
        <taxon>Methanobacteriati</taxon>
        <taxon>Methanobacteriota</taxon>
        <taxon>Methanomada group</taxon>
        <taxon>Methanobacteria</taxon>
        <taxon>Methanobacteriales</taxon>
        <taxon>Methanobacteriaceae</taxon>
        <taxon>Methanothermobacter</taxon>
    </lineage>
</organism>
<dbReference type="EC" id="3.1.3.-" evidence="1"/>
<dbReference type="EMBL" id="AE000666">
    <property type="protein sequence ID" value="AAB84715.1"/>
    <property type="molecule type" value="Genomic_DNA"/>
</dbReference>
<dbReference type="PIR" id="F69125">
    <property type="entry name" value="F69125"/>
</dbReference>
<dbReference type="RefSeq" id="WP_010875848.1">
    <property type="nucleotide sequence ID" value="NC_000916.1"/>
</dbReference>
<dbReference type="SMR" id="O26311"/>
<dbReference type="FunCoup" id="O26311">
    <property type="interactions" value="29"/>
</dbReference>
<dbReference type="STRING" id="187420.MTH_209"/>
<dbReference type="PaxDb" id="187420-MTH_209"/>
<dbReference type="EnsemblBacteria" id="AAB84715">
    <property type="protein sequence ID" value="AAB84715"/>
    <property type="gene ID" value="MTH_209"/>
</dbReference>
<dbReference type="KEGG" id="mth:MTH_209"/>
<dbReference type="PATRIC" id="fig|187420.15.peg.178"/>
<dbReference type="HOGENOM" id="CLU_045011_8_3_2"/>
<dbReference type="InParanoid" id="O26311"/>
<dbReference type="Proteomes" id="UP000005223">
    <property type="component" value="Chromosome"/>
</dbReference>
<dbReference type="GO" id="GO:0046872">
    <property type="term" value="F:metal ion binding"/>
    <property type="evidence" value="ECO:0007669"/>
    <property type="project" value="UniProtKB-KW"/>
</dbReference>
<dbReference type="GO" id="GO:0016791">
    <property type="term" value="F:phosphatase activity"/>
    <property type="evidence" value="ECO:0007669"/>
    <property type="project" value="TreeGrafter"/>
</dbReference>
<dbReference type="GO" id="GO:0044283">
    <property type="term" value="P:small molecule biosynthetic process"/>
    <property type="evidence" value="ECO:0007669"/>
    <property type="project" value="UniProtKB-ARBA"/>
</dbReference>
<dbReference type="CDD" id="cd04305">
    <property type="entry name" value="HAD_Neu5Ac-Pase_like"/>
    <property type="match status" value="1"/>
</dbReference>
<dbReference type="Gene3D" id="1.10.150.520">
    <property type="match status" value="1"/>
</dbReference>
<dbReference type="Gene3D" id="3.40.50.1000">
    <property type="entry name" value="HAD superfamily/HAD-like"/>
    <property type="match status" value="1"/>
</dbReference>
<dbReference type="InterPro" id="IPR051400">
    <property type="entry name" value="HAD-like_hydrolase"/>
</dbReference>
<dbReference type="InterPro" id="IPR036412">
    <property type="entry name" value="HAD-like_sf"/>
</dbReference>
<dbReference type="InterPro" id="IPR006439">
    <property type="entry name" value="HAD-SF_hydro_IA"/>
</dbReference>
<dbReference type="InterPro" id="IPR011950">
    <property type="entry name" value="HAD-SF_hydro_IA_CTE7"/>
</dbReference>
<dbReference type="InterPro" id="IPR006549">
    <property type="entry name" value="HAD-SF_hydro_IIIA"/>
</dbReference>
<dbReference type="InterPro" id="IPR041492">
    <property type="entry name" value="HAD_2"/>
</dbReference>
<dbReference type="InterPro" id="IPR023214">
    <property type="entry name" value="HAD_sf"/>
</dbReference>
<dbReference type="NCBIfam" id="TIGR02253">
    <property type="entry name" value="CTE7"/>
    <property type="match status" value="1"/>
</dbReference>
<dbReference type="NCBIfam" id="TIGR01549">
    <property type="entry name" value="HAD-SF-IA-v1"/>
    <property type="match status" value="1"/>
</dbReference>
<dbReference type="NCBIfam" id="TIGR01662">
    <property type="entry name" value="HAD-SF-IIIA"/>
    <property type="match status" value="1"/>
</dbReference>
<dbReference type="PANTHER" id="PTHR46470:SF2">
    <property type="entry name" value="GLYCERALDEHYDE 3-PHOSPHATE PHOSPHATASE"/>
    <property type="match status" value="1"/>
</dbReference>
<dbReference type="PANTHER" id="PTHR46470">
    <property type="entry name" value="N-ACYLNEURAMINATE-9-PHOSPHATASE"/>
    <property type="match status" value="1"/>
</dbReference>
<dbReference type="Pfam" id="PF13419">
    <property type="entry name" value="HAD_2"/>
    <property type="match status" value="1"/>
</dbReference>
<dbReference type="PRINTS" id="PR00413">
    <property type="entry name" value="HADHALOGNASE"/>
</dbReference>
<dbReference type="SFLD" id="SFLDG01135">
    <property type="entry name" value="C1.5.6:_HAD__Beta-PGM__Phospha"/>
    <property type="match status" value="1"/>
</dbReference>
<dbReference type="SFLD" id="SFLDG01129">
    <property type="entry name" value="C1.5:_HAD__Beta-PGM__Phosphata"/>
    <property type="match status" value="1"/>
</dbReference>
<dbReference type="SUPFAM" id="SSF56784">
    <property type="entry name" value="HAD-like"/>
    <property type="match status" value="1"/>
</dbReference>
<evidence type="ECO:0000250" key="1">
    <source>
        <dbReference type="UniProtKB" id="Q58832"/>
    </source>
</evidence>
<evidence type="ECO:0000305" key="2"/>
<gene>
    <name type="ordered locus">MTH_209</name>
</gene>
<keyword id="KW-0378">Hydrolase</keyword>
<keyword id="KW-0460">Magnesium</keyword>
<keyword id="KW-0479">Metal-binding</keyword>
<keyword id="KW-1185">Reference proteome</keyword>
<feature type="chain" id="PRO_0000107331" description="Glyceraldehyde 3-phosphate phosphatase">
    <location>
        <begin position="1"/>
        <end position="226"/>
    </location>
</feature>
<sequence length="226" mass="25463">MLKAVFFDIDDTLYDTSGFAKLARKAALNVMIDAGLPLTQEEAYKLLREIISEKGSNYDRHFNVLTKTVFGEEKPLLIALGMITYHNVKFALLRPFPNTTSTLIDLKSKGYRLGVISNGITIKQWEKLIRLGIHHFFDEVVTSDEVGFEKPNIRIFEEALRRMGCKPERSVMVGNKFNEDILGATNAGMSAILVNSELTEAERDHVEKNGLDVTVIDDISQLKEIL</sequence>
<accession>O26311</accession>
<comment type="function">
    <text evidence="1">Catalyzes the dephosphorylation of D,L-glyceraldehyde 3-phosphate in vitro.</text>
</comment>
<comment type="cofactor">
    <cofactor evidence="1">
        <name>Mg(2+)</name>
        <dbReference type="ChEBI" id="CHEBI:18420"/>
    </cofactor>
</comment>
<comment type="similarity">
    <text evidence="2">Belongs to the HAD-like hydrolase superfamily.</text>
</comment>
<proteinExistence type="inferred from homology"/>
<protein>
    <recommendedName>
        <fullName evidence="1">Glyceraldehyde 3-phosphate phosphatase</fullName>
        <ecNumber evidence="1">3.1.3.-</ecNumber>
    </recommendedName>
</protein>
<name>G3PP_METTH</name>
<reference key="1">
    <citation type="journal article" date="1997" name="J. Bacteriol.">
        <title>Complete genome sequence of Methanobacterium thermoautotrophicum deltaH: functional analysis and comparative genomics.</title>
        <authorList>
            <person name="Smith D.R."/>
            <person name="Doucette-Stamm L.A."/>
            <person name="Deloughery C."/>
            <person name="Lee H.-M."/>
            <person name="Dubois J."/>
            <person name="Aldredge T."/>
            <person name="Bashirzadeh R."/>
            <person name="Blakely D."/>
            <person name="Cook R."/>
            <person name="Gilbert K."/>
            <person name="Harrison D."/>
            <person name="Hoang L."/>
            <person name="Keagle P."/>
            <person name="Lumm W."/>
            <person name="Pothier B."/>
            <person name="Qiu D."/>
            <person name="Spadafora R."/>
            <person name="Vicare R."/>
            <person name="Wang Y."/>
            <person name="Wierzbowski J."/>
            <person name="Gibson R."/>
            <person name="Jiwani N."/>
            <person name="Caruso A."/>
            <person name="Bush D."/>
            <person name="Safer H."/>
            <person name="Patwell D."/>
            <person name="Prabhakar S."/>
            <person name="McDougall S."/>
            <person name="Shimer G."/>
            <person name="Goyal A."/>
            <person name="Pietrovski S."/>
            <person name="Church G.M."/>
            <person name="Daniels C.J."/>
            <person name="Mao J.-I."/>
            <person name="Rice P."/>
            <person name="Noelling J."/>
            <person name="Reeve J.N."/>
        </authorList>
    </citation>
    <scope>NUCLEOTIDE SEQUENCE [LARGE SCALE GENOMIC DNA]</scope>
    <source>
        <strain>ATCC 29096 / DSM 1053 / JCM 10044 / NBRC 100330 / Delta H</strain>
    </source>
</reference>